<name>MTNN_HALH5</name>
<gene>
    <name evidence="1" type="primary">mtnN</name>
    <name type="ordered locus">BH1279</name>
</gene>
<proteinExistence type="inferred from homology"/>
<feature type="chain" id="PRO_0000359278" description="5'-methylthioadenosine/S-adenosylhomocysteine nucleosidase">
    <location>
        <begin position="1"/>
        <end position="231"/>
    </location>
</feature>
<feature type="active site" description="Proton acceptor" evidence="1">
    <location>
        <position position="13"/>
    </location>
</feature>
<feature type="active site" description="Proton donor" evidence="1">
    <location>
        <position position="198"/>
    </location>
</feature>
<feature type="binding site" evidence="1">
    <location>
        <position position="79"/>
    </location>
    <ligand>
        <name>substrate</name>
    </ligand>
</feature>
<feature type="binding site" evidence="1">
    <location>
        <position position="153"/>
    </location>
    <ligand>
        <name>substrate</name>
    </ligand>
</feature>
<feature type="binding site" evidence="1">
    <location>
        <begin position="174"/>
        <end position="175"/>
    </location>
    <ligand>
        <name>substrate</name>
    </ligand>
</feature>
<dbReference type="EC" id="3.2.2.9" evidence="1"/>
<dbReference type="EMBL" id="BA000004">
    <property type="protein sequence ID" value="BAB04998.1"/>
    <property type="molecule type" value="Genomic_DNA"/>
</dbReference>
<dbReference type="PIR" id="G83809">
    <property type="entry name" value="G83809"/>
</dbReference>
<dbReference type="RefSeq" id="WP_010897447.1">
    <property type="nucleotide sequence ID" value="NC_002570.2"/>
</dbReference>
<dbReference type="SMR" id="Q9KDD4"/>
<dbReference type="STRING" id="272558.gene:10727173"/>
<dbReference type="KEGG" id="bha:BH1279"/>
<dbReference type="eggNOG" id="COG0775">
    <property type="taxonomic scope" value="Bacteria"/>
</dbReference>
<dbReference type="HOGENOM" id="CLU_031248_2_2_9"/>
<dbReference type="OrthoDB" id="9792278at2"/>
<dbReference type="UniPathway" id="UPA00904">
    <property type="reaction ID" value="UER00871"/>
</dbReference>
<dbReference type="Proteomes" id="UP000001258">
    <property type="component" value="Chromosome"/>
</dbReference>
<dbReference type="GO" id="GO:0005829">
    <property type="term" value="C:cytosol"/>
    <property type="evidence" value="ECO:0007669"/>
    <property type="project" value="TreeGrafter"/>
</dbReference>
<dbReference type="GO" id="GO:0008782">
    <property type="term" value="F:adenosylhomocysteine nucleosidase activity"/>
    <property type="evidence" value="ECO:0007669"/>
    <property type="project" value="UniProtKB-UniRule"/>
</dbReference>
<dbReference type="GO" id="GO:0008930">
    <property type="term" value="F:methylthioadenosine nucleosidase activity"/>
    <property type="evidence" value="ECO:0007669"/>
    <property type="project" value="UniProtKB-UniRule"/>
</dbReference>
<dbReference type="GO" id="GO:0019509">
    <property type="term" value="P:L-methionine salvage from methylthioadenosine"/>
    <property type="evidence" value="ECO:0007669"/>
    <property type="project" value="UniProtKB-UniRule"/>
</dbReference>
<dbReference type="GO" id="GO:0019284">
    <property type="term" value="P:L-methionine salvage from S-adenosylmethionine"/>
    <property type="evidence" value="ECO:0007669"/>
    <property type="project" value="TreeGrafter"/>
</dbReference>
<dbReference type="GO" id="GO:0009164">
    <property type="term" value="P:nucleoside catabolic process"/>
    <property type="evidence" value="ECO:0007669"/>
    <property type="project" value="InterPro"/>
</dbReference>
<dbReference type="CDD" id="cd09008">
    <property type="entry name" value="MTAN"/>
    <property type="match status" value="1"/>
</dbReference>
<dbReference type="FunFam" id="3.40.50.1580:FF:000001">
    <property type="entry name" value="MTA/SAH nucleosidase family protein"/>
    <property type="match status" value="1"/>
</dbReference>
<dbReference type="Gene3D" id="3.40.50.1580">
    <property type="entry name" value="Nucleoside phosphorylase domain"/>
    <property type="match status" value="1"/>
</dbReference>
<dbReference type="HAMAP" id="MF_01684">
    <property type="entry name" value="Salvage_MtnN"/>
    <property type="match status" value="1"/>
</dbReference>
<dbReference type="InterPro" id="IPR010049">
    <property type="entry name" value="MTA_SAH_Nsdase"/>
</dbReference>
<dbReference type="InterPro" id="IPR000845">
    <property type="entry name" value="Nucleoside_phosphorylase_d"/>
</dbReference>
<dbReference type="InterPro" id="IPR035994">
    <property type="entry name" value="Nucleoside_phosphorylase_sf"/>
</dbReference>
<dbReference type="NCBIfam" id="TIGR01704">
    <property type="entry name" value="MTA_SAH-Nsdase"/>
    <property type="match status" value="1"/>
</dbReference>
<dbReference type="NCBIfam" id="NF004079">
    <property type="entry name" value="PRK05584.1"/>
    <property type="match status" value="1"/>
</dbReference>
<dbReference type="PANTHER" id="PTHR46832">
    <property type="entry name" value="5'-METHYLTHIOADENOSINE/S-ADENOSYLHOMOCYSTEINE NUCLEOSIDASE"/>
    <property type="match status" value="1"/>
</dbReference>
<dbReference type="PANTHER" id="PTHR46832:SF1">
    <property type="entry name" value="5'-METHYLTHIOADENOSINE_S-ADENOSYLHOMOCYSTEINE NUCLEOSIDASE"/>
    <property type="match status" value="1"/>
</dbReference>
<dbReference type="Pfam" id="PF01048">
    <property type="entry name" value="PNP_UDP_1"/>
    <property type="match status" value="1"/>
</dbReference>
<dbReference type="SUPFAM" id="SSF53167">
    <property type="entry name" value="Purine and uridine phosphorylases"/>
    <property type="match status" value="1"/>
</dbReference>
<comment type="function">
    <text evidence="1">Catalyzes the irreversible cleavage of the glycosidic bond in both 5'-methylthioadenosine (MTA) and S-adenosylhomocysteine (SAH/AdoHcy) to adenine and the corresponding thioribose, 5'-methylthioribose and S-ribosylhomocysteine, respectively. Also cleaves 5'-deoxyadenosine, a toxic by-product of radical S-adenosylmethionine (SAM) enzymes, into 5-deoxyribose and adenine.</text>
</comment>
<comment type="catalytic activity">
    <reaction evidence="1">
        <text>S-adenosyl-L-homocysteine + H2O = S-(5-deoxy-D-ribos-5-yl)-L-homocysteine + adenine</text>
        <dbReference type="Rhea" id="RHEA:17805"/>
        <dbReference type="ChEBI" id="CHEBI:15377"/>
        <dbReference type="ChEBI" id="CHEBI:16708"/>
        <dbReference type="ChEBI" id="CHEBI:57856"/>
        <dbReference type="ChEBI" id="CHEBI:58195"/>
        <dbReference type="EC" id="3.2.2.9"/>
    </reaction>
</comment>
<comment type="catalytic activity">
    <reaction evidence="1">
        <text>S-methyl-5'-thioadenosine + H2O = 5-(methylsulfanyl)-D-ribose + adenine</text>
        <dbReference type="Rhea" id="RHEA:13617"/>
        <dbReference type="ChEBI" id="CHEBI:15377"/>
        <dbReference type="ChEBI" id="CHEBI:16708"/>
        <dbReference type="ChEBI" id="CHEBI:17509"/>
        <dbReference type="ChEBI" id="CHEBI:78440"/>
        <dbReference type="EC" id="3.2.2.9"/>
    </reaction>
</comment>
<comment type="catalytic activity">
    <reaction evidence="1">
        <text>5'-deoxyadenosine + H2O = 5-deoxy-D-ribose + adenine</text>
        <dbReference type="Rhea" id="RHEA:29859"/>
        <dbReference type="ChEBI" id="CHEBI:15377"/>
        <dbReference type="ChEBI" id="CHEBI:16708"/>
        <dbReference type="ChEBI" id="CHEBI:17319"/>
        <dbReference type="ChEBI" id="CHEBI:149540"/>
        <dbReference type="EC" id="3.2.2.9"/>
    </reaction>
    <physiologicalReaction direction="left-to-right" evidence="1">
        <dbReference type="Rhea" id="RHEA:29860"/>
    </physiologicalReaction>
</comment>
<comment type="pathway">
    <text evidence="1">Amino-acid biosynthesis; L-methionine biosynthesis via salvage pathway; S-methyl-5-thio-alpha-D-ribose 1-phosphate from S-methyl-5'-thioadenosine (hydrolase route): step 1/2.</text>
</comment>
<comment type="similarity">
    <text evidence="1">Belongs to the PNP/UDP phosphorylase family. MtnN subfamily.</text>
</comment>
<reference key="1">
    <citation type="journal article" date="2000" name="Nucleic Acids Res.">
        <title>Complete genome sequence of the alkaliphilic bacterium Bacillus halodurans and genomic sequence comparison with Bacillus subtilis.</title>
        <authorList>
            <person name="Takami H."/>
            <person name="Nakasone K."/>
            <person name="Takaki Y."/>
            <person name="Maeno G."/>
            <person name="Sasaki R."/>
            <person name="Masui N."/>
            <person name="Fuji F."/>
            <person name="Hirama C."/>
            <person name="Nakamura Y."/>
            <person name="Ogasawara N."/>
            <person name="Kuhara S."/>
            <person name="Horikoshi K."/>
        </authorList>
    </citation>
    <scope>NUCLEOTIDE SEQUENCE [LARGE SCALE GENOMIC DNA]</scope>
    <source>
        <strain>ATCC BAA-125 / DSM 18197 / FERM 7344 / JCM 9153 / C-125</strain>
    </source>
</reference>
<sequence length="231" mass="24675">MTKIGIIGAMDEEVELLKSKLSNCSERTIAECEFYTGTIEGKEIVLLKSGIGKVNAAIGTTLLIQLFQPTAIINTGSAGGLDSSLHVGDLAISTEVRYNDVDATVFGYEFGQVPQMPAFYQPDDMLIDIAIEAAKTVGIPSKKGLILSGDSFMSDAALVEQLKRRFNYPLCSEMEAGAIAQVCHRFGVPFVIIRSLSDIAGAEAKVSYDEFLETASVNSANLVLAIVGRLG</sequence>
<keyword id="KW-0028">Amino-acid biosynthesis</keyword>
<keyword id="KW-0378">Hydrolase</keyword>
<keyword id="KW-0486">Methionine biosynthesis</keyword>
<keyword id="KW-1185">Reference proteome</keyword>
<evidence type="ECO:0000255" key="1">
    <source>
        <dbReference type="HAMAP-Rule" id="MF_01684"/>
    </source>
</evidence>
<organism>
    <name type="scientific">Halalkalibacterium halodurans (strain ATCC BAA-125 / DSM 18197 / FERM 7344 / JCM 9153 / C-125)</name>
    <name type="common">Bacillus halodurans</name>
    <dbReference type="NCBI Taxonomy" id="272558"/>
    <lineage>
        <taxon>Bacteria</taxon>
        <taxon>Bacillati</taxon>
        <taxon>Bacillota</taxon>
        <taxon>Bacilli</taxon>
        <taxon>Bacillales</taxon>
        <taxon>Bacillaceae</taxon>
        <taxon>Halalkalibacterium (ex Joshi et al. 2022)</taxon>
    </lineage>
</organism>
<protein>
    <recommendedName>
        <fullName evidence="1">5'-methylthioadenosine/S-adenosylhomocysteine nucleosidase</fullName>
        <shortName evidence="1">MTA/SAH nucleosidase</shortName>
        <shortName evidence="1">MTAN</shortName>
        <ecNumber evidence="1">3.2.2.9</ecNumber>
    </recommendedName>
    <alternativeName>
        <fullName evidence="1">5'-deoxyadenosine nucleosidase</fullName>
        <shortName evidence="1">DOA nucleosidase</shortName>
        <shortName evidence="1">dAdo nucleosidase</shortName>
    </alternativeName>
    <alternativeName>
        <fullName evidence="1">5'-methylthioadenosine nucleosidase</fullName>
        <shortName evidence="1">MTA nucleosidase</shortName>
    </alternativeName>
    <alternativeName>
        <fullName evidence="1">S-adenosylhomocysteine nucleosidase</fullName>
        <shortName evidence="1">AdoHcy nucleosidase</shortName>
        <shortName evidence="1">SAH nucleosidase</shortName>
        <shortName evidence="1">SRH nucleosidase</shortName>
    </alternativeName>
</protein>
<accession>Q9KDD4</accession>